<proteinExistence type="inferred from homology"/>
<feature type="chain" id="PRO_1000021038" description="Inner membrane-spanning protein YciB">
    <location>
        <begin position="1"/>
        <end position="178"/>
    </location>
</feature>
<feature type="transmembrane region" description="Helical" evidence="1">
    <location>
        <begin position="22"/>
        <end position="42"/>
    </location>
</feature>
<feature type="transmembrane region" description="Helical" evidence="1">
    <location>
        <begin position="50"/>
        <end position="70"/>
    </location>
</feature>
<feature type="transmembrane region" description="Helical" evidence="1">
    <location>
        <begin position="72"/>
        <end position="92"/>
    </location>
</feature>
<feature type="transmembrane region" description="Helical" evidence="1">
    <location>
        <begin position="121"/>
        <end position="141"/>
    </location>
</feature>
<feature type="transmembrane region" description="Helical" evidence="1">
    <location>
        <begin position="149"/>
        <end position="169"/>
    </location>
</feature>
<keyword id="KW-0997">Cell inner membrane</keyword>
<keyword id="KW-1003">Cell membrane</keyword>
<keyword id="KW-0472">Membrane</keyword>
<keyword id="KW-1185">Reference proteome</keyword>
<keyword id="KW-0812">Transmembrane</keyword>
<keyword id="KW-1133">Transmembrane helix</keyword>
<sequence>MKQLLDFLPLVVFFVVYKMYDIFYASGALIAATGLAVAMTYFIYRKVEKASLITFIMVAVFGTLTLAFHSDLFIKWKVTVIYALFALALLGSQWFMKKPLIQKMLGKELILPDLVWNKLNMAWALFFTACALANIYVAFWLPQDVWVNFKVFGLTALTLVFTVLSVVYIYRHLPREQK</sequence>
<name>YCIB_PHOLL</name>
<organism>
    <name type="scientific">Photorhabdus laumondii subsp. laumondii (strain DSM 15139 / CIP 105565 / TT01)</name>
    <name type="common">Photorhabdus luminescens subsp. laumondii</name>
    <dbReference type="NCBI Taxonomy" id="243265"/>
    <lineage>
        <taxon>Bacteria</taxon>
        <taxon>Pseudomonadati</taxon>
        <taxon>Pseudomonadota</taxon>
        <taxon>Gammaproteobacteria</taxon>
        <taxon>Enterobacterales</taxon>
        <taxon>Morganellaceae</taxon>
        <taxon>Photorhabdus</taxon>
    </lineage>
</organism>
<evidence type="ECO:0000255" key="1">
    <source>
        <dbReference type="HAMAP-Rule" id="MF_00189"/>
    </source>
</evidence>
<dbReference type="EMBL" id="BX571867">
    <property type="protein sequence ID" value="CAE14857.1"/>
    <property type="molecule type" value="Genomic_DNA"/>
</dbReference>
<dbReference type="RefSeq" id="WP_011146706.1">
    <property type="nucleotide sequence ID" value="NC_005126.1"/>
</dbReference>
<dbReference type="STRING" id="243265.plu2483"/>
<dbReference type="GeneID" id="48848748"/>
<dbReference type="KEGG" id="plu:plu2483"/>
<dbReference type="eggNOG" id="COG2917">
    <property type="taxonomic scope" value="Bacteria"/>
</dbReference>
<dbReference type="HOGENOM" id="CLU_089554_2_0_6"/>
<dbReference type="OrthoDB" id="9788219at2"/>
<dbReference type="Proteomes" id="UP000002514">
    <property type="component" value="Chromosome"/>
</dbReference>
<dbReference type="GO" id="GO:0005886">
    <property type="term" value="C:plasma membrane"/>
    <property type="evidence" value="ECO:0007669"/>
    <property type="project" value="UniProtKB-SubCell"/>
</dbReference>
<dbReference type="HAMAP" id="MF_00189">
    <property type="entry name" value="YciB"/>
    <property type="match status" value="1"/>
</dbReference>
<dbReference type="InterPro" id="IPR006008">
    <property type="entry name" value="YciB"/>
</dbReference>
<dbReference type="NCBIfam" id="TIGR00997">
    <property type="entry name" value="ispZ"/>
    <property type="match status" value="1"/>
</dbReference>
<dbReference type="NCBIfam" id="NF001324">
    <property type="entry name" value="PRK00259.1-2"/>
    <property type="match status" value="1"/>
</dbReference>
<dbReference type="NCBIfam" id="NF001325">
    <property type="entry name" value="PRK00259.1-3"/>
    <property type="match status" value="1"/>
</dbReference>
<dbReference type="NCBIfam" id="NF001326">
    <property type="entry name" value="PRK00259.1-4"/>
    <property type="match status" value="1"/>
</dbReference>
<dbReference type="PANTHER" id="PTHR36917:SF1">
    <property type="entry name" value="INNER MEMBRANE-SPANNING PROTEIN YCIB"/>
    <property type="match status" value="1"/>
</dbReference>
<dbReference type="PANTHER" id="PTHR36917">
    <property type="entry name" value="INTRACELLULAR SEPTATION PROTEIN A-RELATED"/>
    <property type="match status" value="1"/>
</dbReference>
<dbReference type="Pfam" id="PF04279">
    <property type="entry name" value="IspA"/>
    <property type="match status" value="1"/>
</dbReference>
<accession>Q7N471</accession>
<comment type="function">
    <text evidence="1">Plays a role in cell envelope biogenesis, maintenance of cell envelope integrity and membrane homeostasis.</text>
</comment>
<comment type="subcellular location">
    <subcellularLocation>
        <location evidence="1">Cell inner membrane</location>
        <topology evidence="1">Multi-pass membrane protein</topology>
    </subcellularLocation>
</comment>
<comment type="similarity">
    <text evidence="1">Belongs to the YciB family.</text>
</comment>
<protein>
    <recommendedName>
        <fullName evidence="1">Inner membrane-spanning protein YciB</fullName>
    </recommendedName>
</protein>
<reference key="1">
    <citation type="journal article" date="2003" name="Nat. Biotechnol.">
        <title>The genome sequence of the entomopathogenic bacterium Photorhabdus luminescens.</title>
        <authorList>
            <person name="Duchaud E."/>
            <person name="Rusniok C."/>
            <person name="Frangeul L."/>
            <person name="Buchrieser C."/>
            <person name="Givaudan A."/>
            <person name="Taourit S."/>
            <person name="Bocs S."/>
            <person name="Boursaux-Eude C."/>
            <person name="Chandler M."/>
            <person name="Charles J.-F."/>
            <person name="Dassa E."/>
            <person name="Derose R."/>
            <person name="Derzelle S."/>
            <person name="Freyssinet G."/>
            <person name="Gaudriault S."/>
            <person name="Medigue C."/>
            <person name="Lanois A."/>
            <person name="Powell K."/>
            <person name="Siguier P."/>
            <person name="Vincent R."/>
            <person name="Wingate V."/>
            <person name="Zouine M."/>
            <person name="Glaser P."/>
            <person name="Boemare N."/>
            <person name="Danchin A."/>
            <person name="Kunst F."/>
        </authorList>
    </citation>
    <scope>NUCLEOTIDE SEQUENCE [LARGE SCALE GENOMIC DNA]</scope>
    <source>
        <strain>DSM 15139 / CIP 105565 / TT01</strain>
    </source>
</reference>
<gene>
    <name evidence="1" type="primary">yciB</name>
    <name type="ordered locus">plu2483</name>
</gene>